<dbReference type="EC" id="2.5.1.19" evidence="1"/>
<dbReference type="EMBL" id="CP000027">
    <property type="protein sequence ID" value="AAW40208.1"/>
    <property type="molecule type" value="Genomic_DNA"/>
</dbReference>
<dbReference type="RefSeq" id="WP_010936240.1">
    <property type="nucleotide sequence ID" value="NC_002936.3"/>
</dbReference>
<dbReference type="SMR" id="Q3Z992"/>
<dbReference type="FunCoup" id="Q3Z992">
    <property type="interactions" value="281"/>
</dbReference>
<dbReference type="STRING" id="243164.DET0463"/>
<dbReference type="GeneID" id="3230172"/>
<dbReference type="KEGG" id="det:DET0463"/>
<dbReference type="PATRIC" id="fig|243164.10.peg.441"/>
<dbReference type="eggNOG" id="COG0128">
    <property type="taxonomic scope" value="Bacteria"/>
</dbReference>
<dbReference type="HOGENOM" id="CLU_024321_0_0_0"/>
<dbReference type="InParanoid" id="Q3Z992"/>
<dbReference type="UniPathway" id="UPA00053">
    <property type="reaction ID" value="UER00089"/>
</dbReference>
<dbReference type="Proteomes" id="UP000008289">
    <property type="component" value="Chromosome"/>
</dbReference>
<dbReference type="GO" id="GO:0005737">
    <property type="term" value="C:cytoplasm"/>
    <property type="evidence" value="ECO:0007669"/>
    <property type="project" value="UniProtKB-SubCell"/>
</dbReference>
<dbReference type="GO" id="GO:0003866">
    <property type="term" value="F:3-phosphoshikimate 1-carboxyvinyltransferase activity"/>
    <property type="evidence" value="ECO:0007669"/>
    <property type="project" value="UniProtKB-UniRule"/>
</dbReference>
<dbReference type="GO" id="GO:0008652">
    <property type="term" value="P:amino acid biosynthetic process"/>
    <property type="evidence" value="ECO:0007669"/>
    <property type="project" value="UniProtKB-KW"/>
</dbReference>
<dbReference type="GO" id="GO:0009073">
    <property type="term" value="P:aromatic amino acid family biosynthetic process"/>
    <property type="evidence" value="ECO:0007669"/>
    <property type="project" value="UniProtKB-KW"/>
</dbReference>
<dbReference type="GO" id="GO:0009423">
    <property type="term" value="P:chorismate biosynthetic process"/>
    <property type="evidence" value="ECO:0007669"/>
    <property type="project" value="UniProtKB-UniRule"/>
</dbReference>
<dbReference type="CDD" id="cd01556">
    <property type="entry name" value="EPSP_synthase"/>
    <property type="match status" value="1"/>
</dbReference>
<dbReference type="Gene3D" id="3.65.10.10">
    <property type="entry name" value="Enolpyruvate transferase domain"/>
    <property type="match status" value="2"/>
</dbReference>
<dbReference type="HAMAP" id="MF_00210">
    <property type="entry name" value="EPSP_synth"/>
    <property type="match status" value="1"/>
</dbReference>
<dbReference type="InterPro" id="IPR001986">
    <property type="entry name" value="Enolpyruvate_Tfrase_dom"/>
</dbReference>
<dbReference type="InterPro" id="IPR036968">
    <property type="entry name" value="Enolpyruvate_Tfrase_sf"/>
</dbReference>
<dbReference type="InterPro" id="IPR006264">
    <property type="entry name" value="EPSP_synthase"/>
</dbReference>
<dbReference type="InterPro" id="IPR023193">
    <property type="entry name" value="EPSP_synthase_CS"/>
</dbReference>
<dbReference type="InterPro" id="IPR013792">
    <property type="entry name" value="RNA3'P_cycl/enolpyr_Trfase_a/b"/>
</dbReference>
<dbReference type="NCBIfam" id="TIGR01356">
    <property type="entry name" value="aroA"/>
    <property type="match status" value="1"/>
</dbReference>
<dbReference type="PANTHER" id="PTHR21090">
    <property type="entry name" value="AROM/DEHYDROQUINATE SYNTHASE"/>
    <property type="match status" value="1"/>
</dbReference>
<dbReference type="PANTHER" id="PTHR21090:SF5">
    <property type="entry name" value="PENTAFUNCTIONAL AROM POLYPEPTIDE"/>
    <property type="match status" value="1"/>
</dbReference>
<dbReference type="Pfam" id="PF00275">
    <property type="entry name" value="EPSP_synthase"/>
    <property type="match status" value="1"/>
</dbReference>
<dbReference type="PIRSF" id="PIRSF000505">
    <property type="entry name" value="EPSPS"/>
    <property type="match status" value="1"/>
</dbReference>
<dbReference type="SUPFAM" id="SSF55205">
    <property type="entry name" value="EPT/RTPC-like"/>
    <property type="match status" value="1"/>
</dbReference>
<dbReference type="PROSITE" id="PS00885">
    <property type="entry name" value="EPSP_SYNTHASE_2"/>
    <property type="match status" value="1"/>
</dbReference>
<evidence type="ECO:0000255" key="1">
    <source>
        <dbReference type="HAMAP-Rule" id="MF_00210"/>
    </source>
</evidence>
<proteinExistence type="inferred from homology"/>
<keyword id="KW-0028">Amino-acid biosynthesis</keyword>
<keyword id="KW-0057">Aromatic amino acid biosynthesis</keyword>
<keyword id="KW-0963">Cytoplasm</keyword>
<keyword id="KW-0808">Transferase</keyword>
<organism>
    <name type="scientific">Dehalococcoides mccartyi (strain ATCC BAA-2266 / KCTC 15142 / 195)</name>
    <name type="common">Dehalococcoides ethenogenes (strain 195)</name>
    <dbReference type="NCBI Taxonomy" id="243164"/>
    <lineage>
        <taxon>Bacteria</taxon>
        <taxon>Bacillati</taxon>
        <taxon>Chloroflexota</taxon>
        <taxon>Dehalococcoidia</taxon>
        <taxon>Dehalococcoidales</taxon>
        <taxon>Dehalococcoidaceae</taxon>
        <taxon>Dehalococcoides</taxon>
    </lineage>
</organism>
<reference key="1">
    <citation type="journal article" date="2005" name="Science">
        <title>Genome sequence of the PCE-dechlorinating bacterium Dehalococcoides ethenogenes.</title>
        <authorList>
            <person name="Seshadri R."/>
            <person name="Adrian L."/>
            <person name="Fouts D.E."/>
            <person name="Eisen J.A."/>
            <person name="Phillippy A.M."/>
            <person name="Methe B.A."/>
            <person name="Ward N.L."/>
            <person name="Nelson W.C."/>
            <person name="DeBoy R.T."/>
            <person name="Khouri H.M."/>
            <person name="Kolonay J.F."/>
            <person name="Dodson R.J."/>
            <person name="Daugherty S.C."/>
            <person name="Brinkac L.M."/>
            <person name="Sullivan S.A."/>
            <person name="Madupu R."/>
            <person name="Nelson K.E."/>
            <person name="Kang K.H."/>
            <person name="Impraim M."/>
            <person name="Tran K."/>
            <person name="Robinson J.M."/>
            <person name="Forberger H.A."/>
            <person name="Fraser C.M."/>
            <person name="Zinder S.H."/>
            <person name="Heidelberg J.F."/>
        </authorList>
    </citation>
    <scope>NUCLEOTIDE SEQUENCE [LARGE SCALE GENOMIC DNA]</scope>
    <source>
        <strain>ATCC BAA-2266 / KCTC 15142 / 195</strain>
    </source>
</reference>
<sequence length="420" mass="45088">MKIRLDKSLPGGEIAVPSSKSYTIRGLIAAAQANGQSRIISPLAADDTLASRQVLSGLGIDINTDAEAESWQLTGNTFKKPAGNLFCRESAATLRFMSAVCARLPFECRLLAGHSLMRRPMLPLIQALHQLGIEIETRGNTTVIKGGEITRSKVSLPGNISSQYVSALMLMAPACKSGLEIHLATPPASLPYLKMTKQTLESFGIKAYTSIDWQEISIPPQPYLPARYRVEGDWSSASSFLALGAIAAPLFISNLDTESFQADRIMIKFLSEMGAEVESGQNWVKVSPKPLTAIQADLTHSIDLLPALAITAACAKGQSILSGVRQARIKESNRIRAVSQGLSAMGINVTEEDDRLIIEGGMPRGAEIDSLGDHRIAMAFGALGAVTGETCISEAECVSKTYPDFWQKLESLGGKVIKDV</sequence>
<protein>
    <recommendedName>
        <fullName evidence="1">3-phosphoshikimate 1-carboxyvinyltransferase</fullName>
        <ecNumber evidence="1">2.5.1.19</ecNumber>
    </recommendedName>
    <alternativeName>
        <fullName evidence="1">5-enolpyruvylshikimate-3-phosphate synthase</fullName>
        <shortName evidence="1">EPSP synthase</shortName>
        <shortName evidence="1">EPSPS</shortName>
    </alternativeName>
</protein>
<name>AROA_DEHM1</name>
<comment type="function">
    <text evidence="1">Catalyzes the transfer of the enolpyruvyl moiety of phosphoenolpyruvate (PEP) to the 5-hydroxyl of shikimate-3-phosphate (S3P) to produce enolpyruvyl shikimate-3-phosphate and inorganic phosphate.</text>
</comment>
<comment type="catalytic activity">
    <reaction evidence="1">
        <text>3-phosphoshikimate + phosphoenolpyruvate = 5-O-(1-carboxyvinyl)-3-phosphoshikimate + phosphate</text>
        <dbReference type="Rhea" id="RHEA:21256"/>
        <dbReference type="ChEBI" id="CHEBI:43474"/>
        <dbReference type="ChEBI" id="CHEBI:57701"/>
        <dbReference type="ChEBI" id="CHEBI:58702"/>
        <dbReference type="ChEBI" id="CHEBI:145989"/>
        <dbReference type="EC" id="2.5.1.19"/>
    </reaction>
    <physiologicalReaction direction="left-to-right" evidence="1">
        <dbReference type="Rhea" id="RHEA:21257"/>
    </physiologicalReaction>
</comment>
<comment type="pathway">
    <text evidence="1">Metabolic intermediate biosynthesis; chorismate biosynthesis; chorismate from D-erythrose 4-phosphate and phosphoenolpyruvate: step 6/7.</text>
</comment>
<comment type="subunit">
    <text evidence="1">Monomer.</text>
</comment>
<comment type="subcellular location">
    <subcellularLocation>
        <location evidence="1">Cytoplasm</location>
    </subcellularLocation>
</comment>
<comment type="similarity">
    <text evidence="1">Belongs to the EPSP synthase family.</text>
</comment>
<feature type="chain" id="PRO_1000124681" description="3-phosphoshikimate 1-carboxyvinyltransferase">
    <location>
        <begin position="1"/>
        <end position="420"/>
    </location>
</feature>
<feature type="active site" description="Proton acceptor" evidence="1">
    <location>
        <position position="303"/>
    </location>
</feature>
<feature type="binding site" evidence="1">
    <location>
        <position position="20"/>
    </location>
    <ligand>
        <name>3-phosphoshikimate</name>
        <dbReference type="ChEBI" id="CHEBI:145989"/>
    </ligand>
</feature>
<feature type="binding site" evidence="1">
    <location>
        <position position="20"/>
    </location>
    <ligand>
        <name>phosphoenolpyruvate</name>
        <dbReference type="ChEBI" id="CHEBI:58702"/>
    </ligand>
</feature>
<feature type="binding site" evidence="1">
    <location>
        <position position="21"/>
    </location>
    <ligand>
        <name>3-phosphoshikimate</name>
        <dbReference type="ChEBI" id="CHEBI:145989"/>
    </ligand>
</feature>
<feature type="binding site" evidence="1">
    <location>
        <position position="25"/>
    </location>
    <ligand>
        <name>3-phosphoshikimate</name>
        <dbReference type="ChEBI" id="CHEBI:145989"/>
    </ligand>
</feature>
<feature type="binding site" evidence="1">
    <location>
        <position position="119"/>
    </location>
    <ligand>
        <name>phosphoenolpyruvate</name>
        <dbReference type="ChEBI" id="CHEBI:58702"/>
    </ligand>
</feature>
<feature type="binding site" evidence="1">
    <location>
        <position position="161"/>
    </location>
    <ligand>
        <name>3-phosphoshikimate</name>
        <dbReference type="ChEBI" id="CHEBI:145989"/>
    </ligand>
</feature>
<feature type="binding site" evidence="1">
    <location>
        <position position="162"/>
    </location>
    <ligand>
        <name>3-phosphoshikimate</name>
        <dbReference type="ChEBI" id="CHEBI:145989"/>
    </ligand>
</feature>
<feature type="binding site" evidence="1">
    <location>
        <position position="163"/>
    </location>
    <ligand>
        <name>3-phosphoshikimate</name>
        <dbReference type="ChEBI" id="CHEBI:145989"/>
    </ligand>
</feature>
<feature type="binding site" evidence="1">
    <location>
        <position position="163"/>
    </location>
    <ligand>
        <name>phosphoenolpyruvate</name>
        <dbReference type="ChEBI" id="CHEBI:58702"/>
    </ligand>
</feature>
<feature type="binding site" evidence="1">
    <location>
        <position position="189"/>
    </location>
    <ligand>
        <name>3-phosphoshikimate</name>
        <dbReference type="ChEBI" id="CHEBI:145989"/>
    </ligand>
</feature>
<feature type="binding site" evidence="1">
    <location>
        <position position="303"/>
    </location>
    <ligand>
        <name>3-phosphoshikimate</name>
        <dbReference type="ChEBI" id="CHEBI:145989"/>
    </ligand>
</feature>
<feature type="binding site" evidence="1">
    <location>
        <position position="326"/>
    </location>
    <ligand>
        <name>3-phosphoshikimate</name>
        <dbReference type="ChEBI" id="CHEBI:145989"/>
    </ligand>
</feature>
<feature type="binding site" evidence="1">
    <location>
        <position position="330"/>
    </location>
    <ligand>
        <name>3-phosphoshikimate</name>
        <dbReference type="ChEBI" id="CHEBI:145989"/>
    </ligand>
</feature>
<feature type="binding site" evidence="1">
    <location>
        <position position="334"/>
    </location>
    <ligand>
        <name>phosphoenolpyruvate</name>
        <dbReference type="ChEBI" id="CHEBI:58702"/>
    </ligand>
</feature>
<feature type="binding site" evidence="1">
    <location>
        <position position="375"/>
    </location>
    <ligand>
        <name>phosphoenolpyruvate</name>
        <dbReference type="ChEBI" id="CHEBI:58702"/>
    </ligand>
</feature>
<feature type="binding site" evidence="1">
    <location>
        <position position="400"/>
    </location>
    <ligand>
        <name>phosphoenolpyruvate</name>
        <dbReference type="ChEBI" id="CHEBI:58702"/>
    </ligand>
</feature>
<gene>
    <name evidence="1" type="primary">aroA</name>
    <name type="ordered locus">DET0463</name>
</gene>
<accession>Q3Z992</accession>